<dbReference type="EMBL" id="AF198100">
    <property type="protein sequence ID" value="AAF44413.1"/>
    <property type="molecule type" value="Genomic_DNA"/>
</dbReference>
<dbReference type="RefSeq" id="NP_039032.1">
    <property type="nucleotide sequence ID" value="NC_002188.1"/>
</dbReference>
<dbReference type="GeneID" id="1486617"/>
<dbReference type="KEGG" id="vg:1486617"/>
<dbReference type="Proteomes" id="UP000008597">
    <property type="component" value="Segment"/>
</dbReference>
<dbReference type="GO" id="GO:0044423">
    <property type="term" value="C:virion component"/>
    <property type="evidence" value="ECO:0007669"/>
    <property type="project" value="UniProtKB-KW"/>
</dbReference>
<dbReference type="InterPro" id="IPR007660">
    <property type="entry name" value="Poxvirus_D3"/>
</dbReference>
<dbReference type="Pfam" id="PF04580">
    <property type="entry name" value="Pox_D3"/>
    <property type="match status" value="1"/>
</dbReference>
<reference key="1">
    <citation type="journal article" date="2000" name="J. Virol.">
        <title>The genome of fowlpox virus.</title>
        <authorList>
            <person name="Afonso C.L."/>
            <person name="Tulman E.R."/>
            <person name="Lu Z."/>
            <person name="Zsak L."/>
            <person name="Kutish G.F."/>
            <person name="Rock D.L."/>
        </authorList>
    </citation>
    <scope>NUCLEOTIDE SEQUENCE [LARGE SCALE GENOMIC DNA]</scope>
</reference>
<accession>P0DTA9</accession>
<accession>Q70H83</accession>
<accession>Q9J5E2</accession>
<gene>
    <name type="ordered locus">FPV069</name>
    <name type="ordered locus">fp9.069</name>
</gene>
<proteinExistence type="evidence at transcript level"/>
<comment type="function">
    <text evidence="1">Late protein which is part of a large complex required for early virion morphogenesis. This complex participates in the formation of virosomes and the incorporation of virosomal contents into nascent immature virions (By similarity).</text>
</comment>
<comment type="subcellular location">
    <subcellularLocation>
        <location evidence="1">Virion</location>
    </subcellularLocation>
    <text evidence="1">Localizes to the virion core.</text>
</comment>
<comment type="induction">
    <text>Expressed in the late phase of the viral replicative cycle.</text>
</comment>
<comment type="similarity">
    <text evidence="2">Belongs to the chordopoxvirinae D3 family.</text>
</comment>
<evidence type="ECO:0000250" key="1"/>
<evidence type="ECO:0000305" key="2"/>
<organismHost>
    <name type="scientific">Vertebrata</name>
    <dbReference type="NCBI Taxonomy" id="7742"/>
</organismHost>
<name>D3_FOWPN</name>
<organism>
    <name type="scientific">Fowlpox virus (strain NVSL)</name>
    <name type="common">FPV</name>
    <dbReference type="NCBI Taxonomy" id="928301"/>
    <lineage>
        <taxon>Viruses</taxon>
        <taxon>Varidnaviria</taxon>
        <taxon>Bamfordvirae</taxon>
        <taxon>Nucleocytoviricota</taxon>
        <taxon>Pokkesviricetes</taxon>
        <taxon>Chitovirales</taxon>
        <taxon>Poxviridae</taxon>
        <taxon>Chordopoxvirinae</taxon>
        <taxon>Avipoxvirus</taxon>
        <taxon>Fowlpox virus</taxon>
    </lineage>
</organism>
<sequence length="270" mass="31962">MEIHRLNSYTSVDYLCNSSNNVYILLGDTDEFINKRIILLMNNIELYYVYEISVNDEDELYHSFITSNVVCPIKQRINLMLYKEYKKVIGSCVINNEGNIKMYSQPDKLHVYVLCYRCNGDIKTITMIKCHQLLKPEKEIVIDGYQVNDSSFFYTSPNLIKQINMDKSDLFYKNILLRKEINCLIRKQESSNLYCILNKHIVSLSDTDIWKVIISDELFDSSDIEKLVKFDYDRDKFHAFVRAWYSGQLSNCKEENETIKTVYEMIEKRI</sequence>
<keyword id="KW-0426">Late protein</keyword>
<keyword id="KW-1185">Reference proteome</keyword>
<keyword id="KW-0946">Virion</keyword>
<feature type="chain" id="PRO_0000099435" description="27 kDa core protein">
    <location>
        <begin position="1"/>
        <end position="270"/>
    </location>
</feature>
<protein>
    <recommendedName>
        <fullName>27 kDa core protein</fullName>
    </recommendedName>
</protein>